<name>RT73_ECOLX</name>
<keyword id="KW-0051">Antiviral defense</keyword>
<keyword id="KW-0460">Magnesium</keyword>
<keyword id="KW-0479">Metal-binding</keyword>
<keyword id="KW-0548">Nucleotidyltransferase</keyword>
<keyword id="KW-0694">RNA-binding</keyword>
<keyword id="KW-0695">RNA-directed DNA polymerase</keyword>
<keyword id="KW-0808">Transferase</keyword>
<organism>
    <name type="scientific">Escherichia coli</name>
    <dbReference type="NCBI Taxonomy" id="562"/>
    <lineage>
        <taxon>Bacteria</taxon>
        <taxon>Pseudomonadati</taxon>
        <taxon>Pseudomonadota</taxon>
        <taxon>Gammaproteobacteria</taxon>
        <taxon>Enterobacterales</taxon>
        <taxon>Enterobacteriaceae</taxon>
        <taxon>Escherichia</taxon>
    </lineage>
</organism>
<feature type="chain" id="PRO_0000456018" description="Retron Ec73 reverse transcriptase">
    <location>
        <begin position="1"/>
        <end position="316"/>
    </location>
</feature>
<feature type="domain" description="Reverse transcriptase" evidence="1">
    <location>
        <begin position="1"/>
        <end position="243"/>
    </location>
</feature>
<feature type="region of interest" description="Necessary and required for recognition and binding of RNA" evidence="2">
    <location>
        <begin position="247"/>
        <end position="316"/>
    </location>
</feature>
<feature type="binding site" evidence="1">
    <location>
        <position position="99"/>
    </location>
    <ligand>
        <name>Mg(2+)</name>
        <dbReference type="ChEBI" id="CHEBI:18420"/>
        <note>catalytic</note>
    </ligand>
</feature>
<feature type="binding site" evidence="1">
    <location>
        <position position="189"/>
    </location>
    <ligand>
        <name>Mg(2+)</name>
        <dbReference type="ChEBI" id="CHEBI:18420"/>
        <note>catalytic</note>
    </ligand>
</feature>
<feature type="binding site" evidence="1">
    <location>
        <position position="190"/>
    </location>
    <ligand>
        <name>Mg(2+)</name>
        <dbReference type="ChEBI" id="CHEBI:18420"/>
        <note>catalytic</note>
    </ligand>
</feature>
<feature type="mutagenesis site" description="No longer protects against bacteriophage SECphi4, SECphi6, SECphi27 or P1 infection." evidence="5">
    <original>DD</original>
    <variation>AA</variation>
    <location>
        <begin position="189"/>
        <end position="190"/>
    </location>
</feature>
<reference evidence="11" key="1">
    <citation type="journal article" date="1991" name="J. Bacteriol.">
        <title>Association of a retroelement with a P4-like cryptic prophage (retronphage phi R73) integrated into the selenocystyl tRNA gene of Escherichia coli.</title>
        <authorList>
            <person name="Sun J."/>
            <person name="Inouye M."/>
            <person name="Inouye S."/>
        </authorList>
    </citation>
    <scope>NUCLEOTIDE SEQUENCE [GENOMIC DNA]</scope>
    <scope>FUNCTION</scope>
    <scope>CATALYTIC ACTIVITY</scope>
    <scope>IDENTIFICATION IN A PROPHAGE</scope>
    <scope>DISRUPTION PHENOTYPE</scope>
    <source>
        <strain>C1-23</strain>
    </source>
</reference>
<reference evidence="10" key="2">
    <citation type="submission" date="2014-11" db="EMBL/GenBank/DDBJ databases">
        <title>Vertical and Horizontal Evolutionary Story implied from E. coli complete genomes.</title>
        <authorList>
            <person name="Jiang J."/>
            <person name="Xu Z."/>
            <person name="Zhou Y."/>
            <person name="Zhao H."/>
            <person name="Leung F.C.C."/>
        </authorList>
    </citation>
    <scope>NUCLEOTIDE SEQUENCE [LARGE SCALE GENOMIC DNA]</scope>
    <source>
        <strain>M10</strain>
    </source>
</reference>
<reference key="3">
    <citation type="journal article" date="1991" name="Science">
        <title>Retronphage phi R73: an E. coli phage that contains a retroelement and integrates into a tRNA gene.</title>
        <authorList>
            <person name="Inouye S."/>
            <person name="Sunshine M.G."/>
            <person name="Six E.W."/>
            <person name="Inouye M."/>
        </authorList>
    </citation>
    <scope>FUNCTION</scope>
    <scope>PROPHAGE EXCISION AND REINFECTION</scope>
    <source>
        <strain>C1-23</strain>
    </source>
</reference>
<reference key="4">
    <citation type="journal article" date="1995" name="J. Biol. Chem.">
        <title>The formation of the 2',5'-phosphodiester linkage in the cDNA priming reaction by bacterial reverse transcriptase in a cell-free system.</title>
        <authorList>
            <person name="Shimamoto T."/>
            <person name="Inouye M."/>
            <person name="Inouye S."/>
        </authorList>
    </citation>
    <scope>FUNCTION</scope>
    <scope>CATALYTIC ACTIVITY</scope>
</reference>
<reference key="5">
    <citation type="journal article" date="1999" name="J. Biol. Chem.">
        <title>Highly specific recognition of primer RNA structures for 2'-OH priming reaction by bacterial reverse transcriptases.</title>
        <authorList>
            <person name="Inouye S."/>
            <person name="Hsu M.Y."/>
            <person name="Xu A."/>
            <person name="Inouye M."/>
        </authorList>
    </citation>
    <scope>FUNCTION</scope>
    <scope>DOMAIN</scope>
    <scope>RNA-BINDING</scope>
</reference>
<reference key="6">
    <citation type="journal article" date="2020" name="Cell">
        <title>Bacterial Retrons Function In Anti-Phage Defense.</title>
        <authorList>
            <person name="Millman A."/>
            <person name="Bernheim A."/>
            <person name="Stokar-Avihail A."/>
            <person name="Fedorenko T."/>
            <person name="Voichek M."/>
            <person name="Leavitt A."/>
            <person name="Oppenheimer-Shaanan Y."/>
            <person name="Sorek R."/>
        </authorList>
    </citation>
    <scope>FUNCTION IN ANTIVIRAL DEFENSE</scope>
    <scope>IDENTIFICATION AS A RETRON</scope>
    <scope>MUTAGENESIS OF 189-ASP-ASP-190</scope>
    <source>
        <strain>M10</strain>
    </source>
</reference>
<gene>
    <name evidence="9" type="primary">ret</name>
    <name type="ORF">Ga0175965_1548</name>
    <name evidence="8" type="ORF">RG59_11970</name>
</gene>
<dbReference type="EC" id="2.7.7.49" evidence="1 6"/>
<dbReference type="EMBL" id="M64113">
    <property type="status" value="NOT_ANNOTATED_CDS"/>
    <property type="molecule type" value="Genomic_DNA"/>
</dbReference>
<dbReference type="EMBL" id="CP010200">
    <property type="protein sequence ID" value="APL18794.1"/>
    <property type="molecule type" value="Genomic_DNA"/>
</dbReference>
<dbReference type="RefSeq" id="WP_032254751.1">
    <property type="nucleotide sequence ID" value="NZ_WTMS01000016.1"/>
</dbReference>
<dbReference type="SMR" id="P0DV86"/>
<dbReference type="GO" id="GO:0046872">
    <property type="term" value="F:metal ion binding"/>
    <property type="evidence" value="ECO:0007669"/>
    <property type="project" value="UniProtKB-KW"/>
</dbReference>
<dbReference type="GO" id="GO:0003723">
    <property type="term" value="F:RNA binding"/>
    <property type="evidence" value="ECO:0007669"/>
    <property type="project" value="UniProtKB-KW"/>
</dbReference>
<dbReference type="GO" id="GO:0003964">
    <property type="term" value="F:RNA-directed DNA polymerase activity"/>
    <property type="evidence" value="ECO:0007669"/>
    <property type="project" value="UniProtKB-KW"/>
</dbReference>
<dbReference type="GO" id="GO:0051607">
    <property type="term" value="P:defense response to virus"/>
    <property type="evidence" value="ECO:0007669"/>
    <property type="project" value="UniProtKB-KW"/>
</dbReference>
<dbReference type="CDD" id="cd03487">
    <property type="entry name" value="RT_Bac_retron_II"/>
    <property type="match status" value="1"/>
</dbReference>
<dbReference type="Gene3D" id="3.30.70.270">
    <property type="match status" value="1"/>
</dbReference>
<dbReference type="Gene3D" id="3.10.10.10">
    <property type="entry name" value="HIV Type 1 Reverse Transcriptase, subunit A, domain 1"/>
    <property type="match status" value="1"/>
</dbReference>
<dbReference type="InterPro" id="IPR043502">
    <property type="entry name" value="DNA/RNA_pol_sf"/>
</dbReference>
<dbReference type="InterPro" id="IPR051083">
    <property type="entry name" value="GrpII_Intron_Splice-Mob/Def"/>
</dbReference>
<dbReference type="InterPro" id="IPR043128">
    <property type="entry name" value="Rev_trsase/Diguanyl_cyclase"/>
</dbReference>
<dbReference type="InterPro" id="IPR000123">
    <property type="entry name" value="Reverse_transcriptase_msDNA"/>
</dbReference>
<dbReference type="InterPro" id="IPR000477">
    <property type="entry name" value="RT_dom"/>
</dbReference>
<dbReference type="NCBIfam" id="NF038233">
    <property type="entry name" value="retron_St85_RT"/>
    <property type="match status" value="1"/>
</dbReference>
<dbReference type="PANTHER" id="PTHR34047">
    <property type="entry name" value="NUCLEAR INTRON MATURASE 1, MITOCHONDRIAL-RELATED"/>
    <property type="match status" value="1"/>
</dbReference>
<dbReference type="PANTHER" id="PTHR34047:SF7">
    <property type="entry name" value="RNA-DIRECTED DNA POLYMERASE"/>
    <property type="match status" value="1"/>
</dbReference>
<dbReference type="Pfam" id="PF00078">
    <property type="entry name" value="RVT_1"/>
    <property type="match status" value="1"/>
</dbReference>
<dbReference type="PRINTS" id="PR00866">
    <property type="entry name" value="RNADNAPOLMS"/>
</dbReference>
<dbReference type="SUPFAM" id="SSF56672">
    <property type="entry name" value="DNA/RNA polymerases"/>
    <property type="match status" value="1"/>
</dbReference>
<dbReference type="PROSITE" id="PS50878">
    <property type="entry name" value="RT_POL"/>
    <property type="match status" value="1"/>
</dbReference>
<protein>
    <recommendedName>
        <fullName evidence="7">Retron Ec73 reverse transcriptase</fullName>
        <shortName evidence="7">RT</shortName>
        <shortName evidence="7">RT-Ec73</shortName>
        <ecNumber evidence="1 6">2.7.7.49</ecNumber>
    </recommendedName>
</protein>
<comment type="function">
    <text evidence="2 3 4 5 6">Reverse transcriptase (RT) component of antiviral defense system retron Ec73, composed of a non-coding RNA (ncRNA) followed by a ribosyltransferase/DNA-binding protein then a reverse transcriptase (RT). Expression of this retron confers protection against bacteriophages SECphi4, SECphi6, SECphi27 and P1. At multiplicity of infection (MOI) of 0.02 cultures grow normally when infected with SECphi4 without collapsing, at MOI 2 cultures enter growth stasis (PubMed:33157039). Responsible for synthesis of msDNA-Ec73 (a branched molecule with RNA linked by a 2',5'-phosphodiester bond to ssDNA). The retron transcript serves as primer (from a conserved internal G residue) and template for the reaction, and codes for the RT (PubMed:10531319, PubMed:1709758, PubMed:1712012, PubMed:7529762). Recognizes only its cognate RNA as a primer template (PubMed:10531319).</text>
</comment>
<comment type="catalytic activity">
    <reaction evidence="1 6">
        <text>DNA(n) + a 2'-deoxyribonucleoside 5'-triphosphate = DNA(n+1) + diphosphate</text>
        <dbReference type="Rhea" id="RHEA:22508"/>
        <dbReference type="Rhea" id="RHEA-COMP:17339"/>
        <dbReference type="Rhea" id="RHEA-COMP:17340"/>
        <dbReference type="ChEBI" id="CHEBI:33019"/>
        <dbReference type="ChEBI" id="CHEBI:61560"/>
        <dbReference type="ChEBI" id="CHEBI:173112"/>
        <dbReference type="EC" id="2.7.7.49"/>
    </reaction>
</comment>
<comment type="domain">
    <text evidence="2">The C-terminal domain (residue 247-316) is required to recognize RNA.</text>
</comment>
<comment type="disruption phenotype">
    <text evidence="4">Bacteria no longer produce msDNA.</text>
</comment>
<comment type="miscellaneous">
    <text evidence="3 4">Part of pro-retronphage phiR73, which is homologous to bacteriophage P4 (PubMed:1712012). With the help of P2 bacteriophage, is excised and packaged into an infectious virion. Retronphage phiR73 can lysogenize a new host strain, reintegrating its genome into the selC gene of the host chromosome and enabling the newly formed lysogens to produce msDNA-Ec73 (PubMed:1709758).</text>
</comment>
<comment type="similarity">
    <text evidence="9">Belongs to the bacterial reverse transcriptase family.</text>
</comment>
<evidence type="ECO:0000255" key="1">
    <source>
        <dbReference type="PROSITE-ProRule" id="PRU00405"/>
    </source>
</evidence>
<evidence type="ECO:0000269" key="2">
    <source>
    </source>
</evidence>
<evidence type="ECO:0000269" key="3">
    <source>
    </source>
</evidence>
<evidence type="ECO:0000269" key="4">
    <source>
    </source>
</evidence>
<evidence type="ECO:0000269" key="5">
    <source>
    </source>
</evidence>
<evidence type="ECO:0000269" key="6">
    <source>
    </source>
</evidence>
<evidence type="ECO:0000303" key="7">
    <source>
    </source>
</evidence>
<evidence type="ECO:0000303" key="8">
    <source ref="2"/>
</evidence>
<evidence type="ECO:0000305" key="9"/>
<evidence type="ECO:0000312" key="10">
    <source>
        <dbReference type="EMBL" id="APL18794.1"/>
    </source>
</evidence>
<evidence type="ECO:0000312" key="11">
    <source>
        <dbReference type="EMBL" id="M64113"/>
    </source>
</evidence>
<accession>P0DV86</accession>
<proteinExistence type="evidence at protein level"/>
<sequence length="316" mass="36750">MRIYSLIDSQTLMTKGFASEVMRSPEPPKKWDIAKKKGGMRTIYHPSSKVKLIQYWLMNNVFSKLPMHNAAYAFVKNRSIKSNALLHAESKNKYYVKIDLKDFFPSIKFTDFEYAFTRYRDRIEFTTEYDKELLQLIKTICFISDSTLPIGFPTSPLIANFVARELDEKLTQKLNAIDKLNATYTRYADDIIVSTNMKGASKLILDCFKRTMKEIGPDFKINIKKFKICSASGGSIVVTGLKVCHDFHITLHRSMKDKIRLHLSLLSKGILKDEDHNKLSGYIAYAKDIDPHFYTKLNRKYFQEIKWIQNLHNKVE</sequence>